<feature type="chain" id="PRO_0000219639" description="Photosystem II reaction center protein I">
    <location>
        <begin position="1"/>
        <end position="36"/>
    </location>
</feature>
<feature type="transmembrane region" description="Helical" evidence="1">
    <location>
        <begin position="4"/>
        <end position="24"/>
    </location>
</feature>
<organism>
    <name type="scientific">Oenothera elata subsp. hookeri</name>
    <name type="common">Hooker's evening primrose</name>
    <name type="synonym">Oenothera hookeri</name>
    <dbReference type="NCBI Taxonomy" id="85636"/>
    <lineage>
        <taxon>Eukaryota</taxon>
        <taxon>Viridiplantae</taxon>
        <taxon>Streptophyta</taxon>
        <taxon>Embryophyta</taxon>
        <taxon>Tracheophyta</taxon>
        <taxon>Spermatophyta</taxon>
        <taxon>Magnoliopsida</taxon>
        <taxon>eudicotyledons</taxon>
        <taxon>Gunneridae</taxon>
        <taxon>Pentapetalae</taxon>
        <taxon>rosids</taxon>
        <taxon>malvids</taxon>
        <taxon>Myrtales</taxon>
        <taxon>Onagraceae</taxon>
        <taxon>Onagroideae</taxon>
        <taxon>Onagreae</taxon>
        <taxon>Oenothera</taxon>
    </lineage>
</organism>
<accession>P62106</accession>
<accession>P09970</accession>
<evidence type="ECO:0000255" key="1">
    <source>
        <dbReference type="HAMAP-Rule" id="MF_01316"/>
    </source>
</evidence>
<sequence length="36" mass="4168">MLTLKLFVYTVVIFFVSLFIFGFLSNDPGRNPGREE</sequence>
<reference key="1">
    <citation type="journal article" date="2000" name="Mol. Gen. Genet.">
        <title>Complete nucleotide sequence of the Oenothera elata plastid chromosome, representing plastome I of the five distinguishable Euoenothera plastomes.</title>
        <authorList>
            <person name="Hupfer H."/>
            <person name="Swiatek M."/>
            <person name="Hornung S."/>
            <person name="Herrmann R.G."/>
            <person name="Maier R.M."/>
            <person name="Chiu W.-L."/>
            <person name="Sears B."/>
        </authorList>
    </citation>
    <scope>NUCLEOTIDE SEQUENCE [LARGE SCALE GENOMIC DNA]</scope>
    <source>
        <strain>cv. Johansen</strain>
    </source>
</reference>
<proteinExistence type="inferred from homology"/>
<protein>
    <recommendedName>
        <fullName evidence="1">Photosystem II reaction center protein I</fullName>
        <shortName evidence="1">PSII-I</shortName>
    </recommendedName>
    <alternativeName>
        <fullName evidence="1">PSII 4.8 kDa protein</fullName>
    </alternativeName>
</protein>
<gene>
    <name evidence="1" type="primary">psbI</name>
</gene>
<geneLocation type="chloroplast"/>
<comment type="function">
    <text evidence="1">One of the components of the core complex of photosystem II (PSII), required for its stability and/or assembly. PSII is a light-driven water:plastoquinone oxidoreductase that uses light energy to abstract electrons from H(2)O, generating O(2) and a proton gradient subsequently used for ATP formation. It consists of a core antenna complex that captures photons, and an electron transfer chain that converts photonic excitation into a charge separation.</text>
</comment>
<comment type="subunit">
    <text evidence="1">PSII is composed of 1 copy each of membrane proteins PsbA, PsbB, PsbC, PsbD, PsbE, PsbF, PsbH, PsbI, PsbJ, PsbK, PsbL, PsbM, PsbT, PsbX, PsbY, PsbZ, Psb30/Ycf12, at least 3 peripheral proteins of the oxygen-evolving complex and a large number of cofactors. It forms dimeric complexes.</text>
</comment>
<comment type="subcellular location">
    <subcellularLocation>
        <location evidence="1">Plastid</location>
        <location evidence="1">Chloroplast thylakoid membrane</location>
        <topology evidence="1">Single-pass membrane protein</topology>
    </subcellularLocation>
</comment>
<comment type="similarity">
    <text evidence="1">Belongs to the PsbI family.</text>
</comment>
<name>PSBI_OENEH</name>
<keyword id="KW-0150">Chloroplast</keyword>
<keyword id="KW-0472">Membrane</keyword>
<keyword id="KW-0602">Photosynthesis</keyword>
<keyword id="KW-0604">Photosystem II</keyword>
<keyword id="KW-0934">Plastid</keyword>
<keyword id="KW-0674">Reaction center</keyword>
<keyword id="KW-0793">Thylakoid</keyword>
<keyword id="KW-0812">Transmembrane</keyword>
<keyword id="KW-1133">Transmembrane helix</keyword>
<dbReference type="EMBL" id="AJ271079">
    <property type="protein sequence ID" value="CAB67161.1"/>
    <property type="molecule type" value="Genomic_DNA"/>
</dbReference>
<dbReference type="RefSeq" id="NP_084696.1">
    <property type="nucleotide sequence ID" value="NC_002693.2"/>
</dbReference>
<dbReference type="SMR" id="P62106"/>
<dbReference type="GeneID" id="802710"/>
<dbReference type="GO" id="GO:0009535">
    <property type="term" value="C:chloroplast thylakoid membrane"/>
    <property type="evidence" value="ECO:0007669"/>
    <property type="project" value="UniProtKB-SubCell"/>
</dbReference>
<dbReference type="GO" id="GO:0009539">
    <property type="term" value="C:photosystem II reaction center"/>
    <property type="evidence" value="ECO:0007669"/>
    <property type="project" value="InterPro"/>
</dbReference>
<dbReference type="GO" id="GO:0015979">
    <property type="term" value="P:photosynthesis"/>
    <property type="evidence" value="ECO:0007669"/>
    <property type="project" value="UniProtKB-UniRule"/>
</dbReference>
<dbReference type="HAMAP" id="MF_01316">
    <property type="entry name" value="PSII_PsbI"/>
    <property type="match status" value="1"/>
</dbReference>
<dbReference type="InterPro" id="IPR003686">
    <property type="entry name" value="PSII_PsbI"/>
</dbReference>
<dbReference type="InterPro" id="IPR037271">
    <property type="entry name" value="PSII_PsbI_sf"/>
</dbReference>
<dbReference type="NCBIfam" id="NF002735">
    <property type="entry name" value="PRK02655.1"/>
    <property type="match status" value="1"/>
</dbReference>
<dbReference type="PANTHER" id="PTHR35772">
    <property type="entry name" value="PHOTOSYSTEM II REACTION CENTER PROTEIN I"/>
    <property type="match status" value="1"/>
</dbReference>
<dbReference type="PANTHER" id="PTHR35772:SF1">
    <property type="entry name" value="PHOTOSYSTEM II REACTION CENTER PROTEIN I"/>
    <property type="match status" value="1"/>
</dbReference>
<dbReference type="Pfam" id="PF02532">
    <property type="entry name" value="PsbI"/>
    <property type="match status" value="1"/>
</dbReference>
<dbReference type="SUPFAM" id="SSF161041">
    <property type="entry name" value="Photosystem II reaction center protein I, PsbI"/>
    <property type="match status" value="1"/>
</dbReference>